<accession>A4IZS6</accession>
<evidence type="ECO:0000255" key="1">
    <source>
        <dbReference type="HAMAP-Rule" id="MF_00374"/>
    </source>
</evidence>
<evidence type="ECO:0000305" key="2"/>
<proteinExistence type="inferred from homology"/>
<keyword id="KW-0687">Ribonucleoprotein</keyword>
<keyword id="KW-0689">Ribosomal protein</keyword>
<organism>
    <name type="scientific">Francisella tularensis subsp. tularensis (strain WY96-3418)</name>
    <dbReference type="NCBI Taxonomy" id="418136"/>
    <lineage>
        <taxon>Bacteria</taxon>
        <taxon>Pseudomonadati</taxon>
        <taxon>Pseudomonadota</taxon>
        <taxon>Gammaproteobacteria</taxon>
        <taxon>Thiotrichales</taxon>
        <taxon>Francisellaceae</taxon>
        <taxon>Francisella</taxon>
    </lineage>
</organism>
<sequence>MKRKDTLKDYRGKSIDQLQEAKIELLQQLFSLRMQKGTGQLKKNHLFKSAKRDIARINTIISEKNK</sequence>
<reference key="1">
    <citation type="journal article" date="2007" name="PLoS ONE">
        <title>Complete genomic characterization of a pathogenic A.II strain of Francisella tularensis subspecies tularensis.</title>
        <authorList>
            <person name="Beckstrom-Sternberg S.M."/>
            <person name="Auerbach R.K."/>
            <person name="Godbole S."/>
            <person name="Pearson J.V."/>
            <person name="Beckstrom-Sternberg J.S."/>
            <person name="Deng Z."/>
            <person name="Munk C."/>
            <person name="Kubota K."/>
            <person name="Zhou Y."/>
            <person name="Bruce D."/>
            <person name="Noronha J."/>
            <person name="Scheuermann R.H."/>
            <person name="Wang A."/>
            <person name="Wei X."/>
            <person name="Wang J."/>
            <person name="Hao J."/>
            <person name="Wagner D.M."/>
            <person name="Brettin T.S."/>
            <person name="Brown N."/>
            <person name="Gilna P."/>
            <person name="Keim P.S."/>
        </authorList>
    </citation>
    <scope>NUCLEOTIDE SEQUENCE [LARGE SCALE GENOMIC DNA]</scope>
    <source>
        <strain>WY96-3418</strain>
    </source>
</reference>
<comment type="similarity">
    <text evidence="1">Belongs to the universal ribosomal protein uL29 family.</text>
</comment>
<dbReference type="EMBL" id="CP000608">
    <property type="protein sequence ID" value="ABO47479.1"/>
    <property type="molecule type" value="Genomic_DNA"/>
</dbReference>
<dbReference type="RefSeq" id="WP_003017801.1">
    <property type="nucleotide sequence ID" value="NC_009257.1"/>
</dbReference>
<dbReference type="SMR" id="A4IZS6"/>
<dbReference type="GeneID" id="75264253"/>
<dbReference type="KEGG" id="ftw:FTW_2082"/>
<dbReference type="HOGENOM" id="CLU_158491_1_2_6"/>
<dbReference type="GO" id="GO:0022625">
    <property type="term" value="C:cytosolic large ribosomal subunit"/>
    <property type="evidence" value="ECO:0007669"/>
    <property type="project" value="TreeGrafter"/>
</dbReference>
<dbReference type="GO" id="GO:0003735">
    <property type="term" value="F:structural constituent of ribosome"/>
    <property type="evidence" value="ECO:0007669"/>
    <property type="project" value="InterPro"/>
</dbReference>
<dbReference type="GO" id="GO:0006412">
    <property type="term" value="P:translation"/>
    <property type="evidence" value="ECO:0007669"/>
    <property type="project" value="UniProtKB-UniRule"/>
</dbReference>
<dbReference type="CDD" id="cd00427">
    <property type="entry name" value="Ribosomal_L29_HIP"/>
    <property type="match status" value="1"/>
</dbReference>
<dbReference type="Gene3D" id="6.10.140.1970">
    <property type="match status" value="1"/>
</dbReference>
<dbReference type="HAMAP" id="MF_00374">
    <property type="entry name" value="Ribosomal_uL29"/>
    <property type="match status" value="1"/>
</dbReference>
<dbReference type="InterPro" id="IPR050063">
    <property type="entry name" value="Ribosomal_protein_uL29"/>
</dbReference>
<dbReference type="InterPro" id="IPR001854">
    <property type="entry name" value="Ribosomal_uL29"/>
</dbReference>
<dbReference type="InterPro" id="IPR018254">
    <property type="entry name" value="Ribosomal_uL29_CS"/>
</dbReference>
<dbReference type="InterPro" id="IPR036049">
    <property type="entry name" value="Ribosomal_uL29_sf"/>
</dbReference>
<dbReference type="NCBIfam" id="TIGR00012">
    <property type="entry name" value="L29"/>
    <property type="match status" value="1"/>
</dbReference>
<dbReference type="PANTHER" id="PTHR10916">
    <property type="entry name" value="60S RIBOSOMAL PROTEIN L35/50S RIBOSOMAL PROTEIN L29"/>
    <property type="match status" value="1"/>
</dbReference>
<dbReference type="PANTHER" id="PTHR10916:SF0">
    <property type="entry name" value="LARGE RIBOSOMAL SUBUNIT PROTEIN UL29C"/>
    <property type="match status" value="1"/>
</dbReference>
<dbReference type="Pfam" id="PF00831">
    <property type="entry name" value="Ribosomal_L29"/>
    <property type="match status" value="1"/>
</dbReference>
<dbReference type="SUPFAM" id="SSF46561">
    <property type="entry name" value="Ribosomal protein L29 (L29p)"/>
    <property type="match status" value="1"/>
</dbReference>
<dbReference type="PROSITE" id="PS00579">
    <property type="entry name" value="RIBOSOMAL_L29"/>
    <property type="match status" value="1"/>
</dbReference>
<gene>
    <name evidence="1" type="primary">rpmC</name>
    <name type="ordered locus">FTW_2082</name>
</gene>
<name>RL29_FRATW</name>
<feature type="chain" id="PRO_1000007488" description="Large ribosomal subunit protein uL29">
    <location>
        <begin position="1"/>
        <end position="66"/>
    </location>
</feature>
<protein>
    <recommendedName>
        <fullName evidence="1">Large ribosomal subunit protein uL29</fullName>
    </recommendedName>
    <alternativeName>
        <fullName evidence="2">50S ribosomal protein L29</fullName>
    </alternativeName>
</protein>